<organism>
    <name type="scientific">Danio rerio</name>
    <name type="common">Zebrafish</name>
    <name type="synonym">Brachydanio rerio</name>
    <dbReference type="NCBI Taxonomy" id="7955"/>
    <lineage>
        <taxon>Eukaryota</taxon>
        <taxon>Metazoa</taxon>
        <taxon>Chordata</taxon>
        <taxon>Craniata</taxon>
        <taxon>Vertebrata</taxon>
        <taxon>Euteleostomi</taxon>
        <taxon>Actinopterygii</taxon>
        <taxon>Neopterygii</taxon>
        <taxon>Teleostei</taxon>
        <taxon>Ostariophysi</taxon>
        <taxon>Cypriniformes</taxon>
        <taxon>Danionidae</taxon>
        <taxon>Danioninae</taxon>
        <taxon>Danio</taxon>
    </lineage>
</organism>
<proteinExistence type="evidence at protein level"/>
<dbReference type="EMBL" id="BC122169">
    <property type="protein sequence ID" value="AAI22170.1"/>
    <property type="molecule type" value="mRNA"/>
</dbReference>
<dbReference type="RefSeq" id="NP_001038936.1">
    <property type="nucleotide sequence ID" value="NM_001045471.2"/>
</dbReference>
<dbReference type="FunCoup" id="Q0P4B9">
    <property type="interactions" value="262"/>
</dbReference>
<dbReference type="STRING" id="7955.ENSDARP00000092790"/>
<dbReference type="PaxDb" id="7955-ENSDARP00000092790"/>
<dbReference type="Ensembl" id="ENSDART00000102014">
    <property type="protein sequence ID" value="ENSDARP00000092790"/>
    <property type="gene ID" value="ENSDARG00000078383"/>
</dbReference>
<dbReference type="GeneID" id="751762"/>
<dbReference type="KEGG" id="dre:751762"/>
<dbReference type="AGR" id="ZFIN:ZDB-GENE-060825-259"/>
<dbReference type="CTD" id="348262"/>
<dbReference type="ZFIN" id="ZDB-GENE-060825-259">
    <property type="gene designation" value="mcrip1"/>
</dbReference>
<dbReference type="eggNOG" id="ENOG502S25D">
    <property type="taxonomic scope" value="Eukaryota"/>
</dbReference>
<dbReference type="HOGENOM" id="CLU_161057_0_0_1"/>
<dbReference type="InParanoid" id="Q0P4B9"/>
<dbReference type="OMA" id="PQNHERN"/>
<dbReference type="OrthoDB" id="8170061at2759"/>
<dbReference type="PhylomeDB" id="Q0P4B9"/>
<dbReference type="TreeFam" id="TF326620"/>
<dbReference type="PRO" id="PR:Q0P4B9"/>
<dbReference type="Proteomes" id="UP000000437">
    <property type="component" value="Chromosome 3"/>
</dbReference>
<dbReference type="Bgee" id="ENSDARG00000078383">
    <property type="expression patterns" value="Expressed in mature ovarian follicle and 26 other cell types or tissues"/>
</dbReference>
<dbReference type="GO" id="GO:0005737">
    <property type="term" value="C:cytoplasm"/>
    <property type="evidence" value="ECO:0000250"/>
    <property type="project" value="UniProtKB"/>
</dbReference>
<dbReference type="GO" id="GO:0010494">
    <property type="term" value="C:cytoplasmic stress granule"/>
    <property type="evidence" value="ECO:0000250"/>
    <property type="project" value="UniProtKB"/>
</dbReference>
<dbReference type="GO" id="GO:0005634">
    <property type="term" value="C:nucleus"/>
    <property type="evidence" value="ECO:0000250"/>
    <property type="project" value="UniProtKB"/>
</dbReference>
<dbReference type="GO" id="GO:0010717">
    <property type="term" value="P:regulation of epithelial to mesenchymal transition"/>
    <property type="evidence" value="ECO:0000250"/>
    <property type="project" value="UniProtKB"/>
</dbReference>
<dbReference type="InterPro" id="IPR029428">
    <property type="entry name" value="MCRIP"/>
</dbReference>
<dbReference type="Pfam" id="PF14799">
    <property type="entry name" value="FAM195"/>
    <property type="match status" value="1"/>
</dbReference>
<name>MCRI1_DANRE</name>
<comment type="function">
    <text evidence="1">May play a role in the regulation of the epithelial-mesenchymal transition.</text>
</comment>
<comment type="subcellular location">
    <subcellularLocation>
        <location evidence="1">Nucleus</location>
    </subcellularLocation>
    <subcellularLocation>
        <location evidence="1">Cytoplasm</location>
        <location evidence="1">Stress granule</location>
    </subcellularLocation>
</comment>
<comment type="similarity">
    <text evidence="3">Belongs to the MCRIP family.</text>
</comment>
<sequence>MTSSSTPRMHTYKRTSSPRSPTNTGELFTPAHEENVRFIHDTWLCVLRDIKCPQNHERNDRGPQEYVEKNPNPNLHSFIPVDLSDLKKRNTQDSKKS</sequence>
<gene>
    <name type="primary">mcrip1</name>
    <name type="synonym">fam195b</name>
    <name type="ORF">zgc:153165</name>
</gene>
<feature type="chain" id="PRO_0000393959" description="Mapk-regulated corepressor-interacting protein 1">
    <location>
        <begin position="1"/>
        <end position="97"/>
    </location>
</feature>
<feature type="region of interest" description="Disordered" evidence="2">
    <location>
        <begin position="1"/>
        <end position="27"/>
    </location>
</feature>
<feature type="region of interest" description="Disordered" evidence="2">
    <location>
        <begin position="54"/>
        <end position="97"/>
    </location>
</feature>
<feature type="short sequence motif" description="PXDLS motif" evidence="3">
    <location>
        <begin position="80"/>
        <end position="84"/>
    </location>
</feature>
<feature type="compositionally biased region" description="Polar residues" evidence="2">
    <location>
        <begin position="1"/>
        <end position="26"/>
    </location>
</feature>
<feature type="compositionally biased region" description="Basic and acidic residues" evidence="2">
    <location>
        <begin position="54"/>
        <end position="68"/>
    </location>
</feature>
<feature type="compositionally biased region" description="Basic and acidic residues" evidence="2">
    <location>
        <begin position="84"/>
        <end position="97"/>
    </location>
</feature>
<evidence type="ECO:0000250" key="1">
    <source>
        <dbReference type="UniProtKB" id="C9JLW8"/>
    </source>
</evidence>
<evidence type="ECO:0000256" key="2">
    <source>
        <dbReference type="SAM" id="MobiDB-lite"/>
    </source>
</evidence>
<evidence type="ECO:0000305" key="3"/>
<accession>Q0P4B9</accession>
<protein>
    <recommendedName>
        <fullName>Mapk-regulated corepressor-interacting protein 1</fullName>
    </recommendedName>
    <alternativeName>
        <fullName>Protein FAM195B</fullName>
    </alternativeName>
</protein>
<reference key="1">
    <citation type="submission" date="2006-08" db="EMBL/GenBank/DDBJ databases">
        <authorList>
            <consortium name="NIH - Zebrafish Gene Collection (ZGC) project"/>
        </authorList>
    </citation>
    <scope>NUCLEOTIDE SEQUENCE [LARGE SCALE MRNA]</scope>
    <source>
        <tissue>Olfactory epithelium</tissue>
    </source>
</reference>
<reference key="2">
    <citation type="journal article" date="2008" name="J. Proteome Res.">
        <title>Online automated in vivo zebrafish phosphoproteomics: from large-scale analysis down to a single embryo.</title>
        <authorList>
            <person name="Lemeer S."/>
            <person name="Pinkse M.W.H."/>
            <person name="Mohammed S."/>
            <person name="van Breukelen B."/>
            <person name="den Hertog J."/>
            <person name="Slijper M."/>
            <person name="Heck A.J.R."/>
        </authorList>
    </citation>
    <scope>PHOSPHORYLATION [LARGE SCALE ANALYSIS]</scope>
    <scope>IDENTIFICATION BY MASS SPECTROMETRY</scope>
    <source>
        <tissue>Embryo</tissue>
    </source>
</reference>
<keyword id="KW-0963">Cytoplasm</keyword>
<keyword id="KW-0539">Nucleus</keyword>
<keyword id="KW-1185">Reference proteome</keyword>